<evidence type="ECO:0000255" key="1">
    <source>
        <dbReference type="HAMAP-Rule" id="MF_00454"/>
    </source>
</evidence>
<keyword id="KW-0997">Cell inner membrane</keyword>
<keyword id="KW-1003">Cell membrane</keyword>
<keyword id="KW-0407">Ion channel</keyword>
<keyword id="KW-0406">Ion transport</keyword>
<keyword id="KW-0472">Membrane</keyword>
<keyword id="KW-0479">Metal-binding</keyword>
<keyword id="KW-1185">Reference proteome</keyword>
<keyword id="KW-0915">Sodium</keyword>
<keyword id="KW-0812">Transmembrane</keyword>
<keyword id="KW-1133">Transmembrane helix</keyword>
<keyword id="KW-0813">Transport</keyword>
<name>FLUC1_BRADU</name>
<accession>Q89RX4</accession>
<proteinExistence type="inferred from homology"/>
<dbReference type="EMBL" id="BA000040">
    <property type="protein sequence ID" value="BAC47903.1"/>
    <property type="molecule type" value="Genomic_DNA"/>
</dbReference>
<dbReference type="RefSeq" id="NP_769278.1">
    <property type="nucleotide sequence ID" value="NC_004463.1"/>
</dbReference>
<dbReference type="RefSeq" id="WP_011085424.1">
    <property type="nucleotide sequence ID" value="NC_004463.1"/>
</dbReference>
<dbReference type="SMR" id="Q89RX4"/>
<dbReference type="FunCoup" id="Q89RX4">
    <property type="interactions" value="378"/>
</dbReference>
<dbReference type="STRING" id="224911.AAV28_10185"/>
<dbReference type="EnsemblBacteria" id="BAC47903">
    <property type="protein sequence ID" value="BAC47903"/>
    <property type="gene ID" value="BAC47903"/>
</dbReference>
<dbReference type="GeneID" id="46489686"/>
<dbReference type="KEGG" id="bja:bll2638"/>
<dbReference type="PATRIC" id="fig|224911.44.peg.2238"/>
<dbReference type="eggNOG" id="COG0239">
    <property type="taxonomic scope" value="Bacteria"/>
</dbReference>
<dbReference type="HOGENOM" id="CLU_114342_3_0_5"/>
<dbReference type="InParanoid" id="Q89RX4"/>
<dbReference type="OrthoDB" id="9806299at2"/>
<dbReference type="PhylomeDB" id="Q89RX4"/>
<dbReference type="Proteomes" id="UP000002526">
    <property type="component" value="Chromosome"/>
</dbReference>
<dbReference type="GO" id="GO:0005886">
    <property type="term" value="C:plasma membrane"/>
    <property type="evidence" value="ECO:0000318"/>
    <property type="project" value="GO_Central"/>
</dbReference>
<dbReference type="GO" id="GO:0062054">
    <property type="term" value="F:fluoride channel activity"/>
    <property type="evidence" value="ECO:0007669"/>
    <property type="project" value="UniProtKB-UniRule"/>
</dbReference>
<dbReference type="GO" id="GO:1903425">
    <property type="term" value="F:fluoride transmembrane transporter activity"/>
    <property type="evidence" value="ECO:0000318"/>
    <property type="project" value="GO_Central"/>
</dbReference>
<dbReference type="GO" id="GO:0046872">
    <property type="term" value="F:metal ion binding"/>
    <property type="evidence" value="ECO:0007669"/>
    <property type="project" value="UniProtKB-KW"/>
</dbReference>
<dbReference type="GO" id="GO:0140114">
    <property type="term" value="P:cellular detoxification of fluoride"/>
    <property type="evidence" value="ECO:0007669"/>
    <property type="project" value="UniProtKB-UniRule"/>
</dbReference>
<dbReference type="GO" id="GO:1903424">
    <property type="term" value="P:fluoride transmembrane transport"/>
    <property type="evidence" value="ECO:0000318"/>
    <property type="project" value="GO_Central"/>
</dbReference>
<dbReference type="HAMAP" id="MF_00454">
    <property type="entry name" value="FluC"/>
    <property type="match status" value="1"/>
</dbReference>
<dbReference type="InterPro" id="IPR003691">
    <property type="entry name" value="FluC"/>
</dbReference>
<dbReference type="PANTHER" id="PTHR28259">
    <property type="entry name" value="FLUORIDE EXPORT PROTEIN 1-RELATED"/>
    <property type="match status" value="1"/>
</dbReference>
<dbReference type="PANTHER" id="PTHR28259:SF1">
    <property type="entry name" value="FLUORIDE EXPORT PROTEIN 1-RELATED"/>
    <property type="match status" value="1"/>
</dbReference>
<dbReference type="Pfam" id="PF02537">
    <property type="entry name" value="CRCB"/>
    <property type="match status" value="1"/>
</dbReference>
<reference key="1">
    <citation type="journal article" date="2002" name="DNA Res.">
        <title>Complete genomic sequence of nitrogen-fixing symbiotic bacterium Bradyrhizobium japonicum USDA110.</title>
        <authorList>
            <person name="Kaneko T."/>
            <person name="Nakamura Y."/>
            <person name="Sato S."/>
            <person name="Minamisawa K."/>
            <person name="Uchiumi T."/>
            <person name="Sasamoto S."/>
            <person name="Watanabe A."/>
            <person name="Idesawa K."/>
            <person name="Iriguchi M."/>
            <person name="Kawashima K."/>
            <person name="Kohara M."/>
            <person name="Matsumoto M."/>
            <person name="Shimpo S."/>
            <person name="Tsuruoka H."/>
            <person name="Wada T."/>
            <person name="Yamada M."/>
            <person name="Tabata S."/>
        </authorList>
    </citation>
    <scope>NUCLEOTIDE SEQUENCE [LARGE SCALE GENOMIC DNA]</scope>
    <source>
        <strain>JCM 10833 / BCRC 13528 / IAM 13628 / NBRC 14792 / USDA 110</strain>
    </source>
</reference>
<sequence>MNVPSSAERWRSAMLYAWVSAGSVVGGLTRYLVGLALDTGPGFPFATLFINATGSLIIGFYATLTGPDGRMLARPEHRQFVMTGFCGGYTTFSAFSLETFRLFHGGMKYIALAYVASSVVCWLVSVWLGHIMASRYNRLKRS</sequence>
<feature type="chain" id="PRO_0000110065" description="Fluoride-specific ion channel FluC 1">
    <location>
        <begin position="1"/>
        <end position="142"/>
    </location>
</feature>
<feature type="transmembrane region" description="Helical" evidence="1">
    <location>
        <begin position="17"/>
        <end position="37"/>
    </location>
</feature>
<feature type="transmembrane region" description="Helical" evidence="1">
    <location>
        <begin position="42"/>
        <end position="62"/>
    </location>
</feature>
<feature type="transmembrane region" description="Helical" evidence="1">
    <location>
        <begin position="80"/>
        <end position="100"/>
    </location>
</feature>
<feature type="transmembrane region" description="Helical" evidence="1">
    <location>
        <begin position="109"/>
        <end position="129"/>
    </location>
</feature>
<feature type="binding site" evidence="1">
    <location>
        <position position="87"/>
    </location>
    <ligand>
        <name>Na(+)</name>
        <dbReference type="ChEBI" id="CHEBI:29101"/>
        <note>structural</note>
    </ligand>
</feature>
<feature type="binding site" evidence="1">
    <location>
        <position position="90"/>
    </location>
    <ligand>
        <name>Na(+)</name>
        <dbReference type="ChEBI" id="CHEBI:29101"/>
        <note>structural</note>
    </ligand>
</feature>
<comment type="function">
    <text evidence="1">Fluoride-specific ion channel. Important for reducing fluoride concentration in the cell, thus reducing its toxicity.</text>
</comment>
<comment type="catalytic activity">
    <reaction evidence="1">
        <text>fluoride(in) = fluoride(out)</text>
        <dbReference type="Rhea" id="RHEA:76159"/>
        <dbReference type="ChEBI" id="CHEBI:17051"/>
    </reaction>
    <physiologicalReaction direction="left-to-right" evidence="1">
        <dbReference type="Rhea" id="RHEA:76160"/>
    </physiologicalReaction>
</comment>
<comment type="activity regulation">
    <text evidence="1">Na(+) is not transported, but it plays an essential structural role and its presence is essential for fluoride channel function.</text>
</comment>
<comment type="subcellular location">
    <subcellularLocation>
        <location evidence="1">Cell inner membrane</location>
        <topology evidence="1">Multi-pass membrane protein</topology>
    </subcellularLocation>
</comment>
<comment type="similarity">
    <text evidence="1">Belongs to the fluoride channel Fluc/FEX (TC 1.A.43) family.</text>
</comment>
<protein>
    <recommendedName>
        <fullName evidence="1">Fluoride-specific ion channel FluC 1</fullName>
    </recommendedName>
</protein>
<organism>
    <name type="scientific">Bradyrhizobium diazoefficiens (strain JCM 10833 / BCRC 13528 / IAM 13628 / NBRC 14792 / USDA 110)</name>
    <dbReference type="NCBI Taxonomy" id="224911"/>
    <lineage>
        <taxon>Bacteria</taxon>
        <taxon>Pseudomonadati</taxon>
        <taxon>Pseudomonadota</taxon>
        <taxon>Alphaproteobacteria</taxon>
        <taxon>Hyphomicrobiales</taxon>
        <taxon>Nitrobacteraceae</taxon>
        <taxon>Bradyrhizobium</taxon>
    </lineage>
</organism>
<gene>
    <name evidence="1" type="primary">fluC1</name>
    <name evidence="1" type="synonym">crcB1</name>
    <name type="ordered locus">bll2638</name>
</gene>